<gene>
    <name evidence="1" type="primary">yggX</name>
    <name type="ordered locus">ECIAI39_3386</name>
</gene>
<comment type="function">
    <text evidence="1">Could be a mediator in iron transactions between iron acquisition and iron-requiring processes, such as synthesis and/or repair of Fe-S clusters in biosynthetic enzymes.</text>
</comment>
<comment type="subunit">
    <text evidence="1">Monomer.</text>
</comment>
<comment type="similarity">
    <text evidence="1">Belongs to the Fe(2+)-trafficking protein family.</text>
</comment>
<protein>
    <recommendedName>
        <fullName evidence="1">Probable Fe(2+)-trafficking protein</fullName>
    </recommendedName>
</protein>
<organism>
    <name type="scientific">Escherichia coli O7:K1 (strain IAI39 / ExPEC)</name>
    <dbReference type="NCBI Taxonomy" id="585057"/>
    <lineage>
        <taxon>Bacteria</taxon>
        <taxon>Pseudomonadati</taxon>
        <taxon>Pseudomonadota</taxon>
        <taxon>Gammaproteobacteria</taxon>
        <taxon>Enterobacterales</taxon>
        <taxon>Enterobacteriaceae</taxon>
        <taxon>Escherichia</taxon>
    </lineage>
</organism>
<name>FETP_ECO7I</name>
<sequence>MSRTIFCTFLQREAEGQDFQLYPGELGKRIYNEISKEAWAQWQHKQTMLINEKKLNMMNAEHRKLLEQEMVNFLFEGKEVHIEGYTPEDKK</sequence>
<keyword id="KW-0408">Iron</keyword>
<accession>B7NI31</accession>
<proteinExistence type="inferred from homology"/>
<feature type="chain" id="PRO_1000131841" description="Probable Fe(2+)-trafficking protein">
    <location>
        <begin position="1"/>
        <end position="91"/>
    </location>
</feature>
<evidence type="ECO:0000255" key="1">
    <source>
        <dbReference type="HAMAP-Rule" id="MF_00686"/>
    </source>
</evidence>
<reference key="1">
    <citation type="journal article" date="2009" name="PLoS Genet.">
        <title>Organised genome dynamics in the Escherichia coli species results in highly diverse adaptive paths.</title>
        <authorList>
            <person name="Touchon M."/>
            <person name="Hoede C."/>
            <person name="Tenaillon O."/>
            <person name="Barbe V."/>
            <person name="Baeriswyl S."/>
            <person name="Bidet P."/>
            <person name="Bingen E."/>
            <person name="Bonacorsi S."/>
            <person name="Bouchier C."/>
            <person name="Bouvet O."/>
            <person name="Calteau A."/>
            <person name="Chiapello H."/>
            <person name="Clermont O."/>
            <person name="Cruveiller S."/>
            <person name="Danchin A."/>
            <person name="Diard M."/>
            <person name="Dossat C."/>
            <person name="Karoui M.E."/>
            <person name="Frapy E."/>
            <person name="Garry L."/>
            <person name="Ghigo J.M."/>
            <person name="Gilles A.M."/>
            <person name="Johnson J."/>
            <person name="Le Bouguenec C."/>
            <person name="Lescat M."/>
            <person name="Mangenot S."/>
            <person name="Martinez-Jehanne V."/>
            <person name="Matic I."/>
            <person name="Nassif X."/>
            <person name="Oztas S."/>
            <person name="Petit M.A."/>
            <person name="Pichon C."/>
            <person name="Rouy Z."/>
            <person name="Ruf C.S."/>
            <person name="Schneider D."/>
            <person name="Tourret J."/>
            <person name="Vacherie B."/>
            <person name="Vallenet D."/>
            <person name="Medigue C."/>
            <person name="Rocha E.P.C."/>
            <person name="Denamur E."/>
        </authorList>
    </citation>
    <scope>NUCLEOTIDE SEQUENCE [LARGE SCALE GENOMIC DNA]</scope>
    <source>
        <strain>IAI39 / ExPEC</strain>
    </source>
</reference>
<dbReference type="EMBL" id="CU928164">
    <property type="protein sequence ID" value="CAR19503.1"/>
    <property type="molecule type" value="Genomic_DNA"/>
</dbReference>
<dbReference type="RefSeq" id="WP_000091700.1">
    <property type="nucleotide sequence ID" value="NC_011750.1"/>
</dbReference>
<dbReference type="RefSeq" id="YP_002409305.1">
    <property type="nucleotide sequence ID" value="NC_011750.1"/>
</dbReference>
<dbReference type="SMR" id="B7NI31"/>
<dbReference type="STRING" id="585057.ECIAI39_3386"/>
<dbReference type="KEGG" id="ect:ECIAI39_3386"/>
<dbReference type="PATRIC" id="fig|585057.6.peg.3515"/>
<dbReference type="HOGENOM" id="CLU_170994_0_0_6"/>
<dbReference type="Proteomes" id="UP000000749">
    <property type="component" value="Chromosome"/>
</dbReference>
<dbReference type="GO" id="GO:0005829">
    <property type="term" value="C:cytosol"/>
    <property type="evidence" value="ECO:0007669"/>
    <property type="project" value="TreeGrafter"/>
</dbReference>
<dbReference type="GO" id="GO:0005506">
    <property type="term" value="F:iron ion binding"/>
    <property type="evidence" value="ECO:0007669"/>
    <property type="project" value="UniProtKB-UniRule"/>
</dbReference>
<dbReference type="GO" id="GO:0034599">
    <property type="term" value="P:cellular response to oxidative stress"/>
    <property type="evidence" value="ECO:0007669"/>
    <property type="project" value="TreeGrafter"/>
</dbReference>
<dbReference type="FunFam" id="1.10.3880.10:FF:000001">
    <property type="entry name" value="Probable Fe(2+)-trafficking protein"/>
    <property type="match status" value="1"/>
</dbReference>
<dbReference type="Gene3D" id="1.10.3880.10">
    <property type="entry name" value="Fe(II) trafficking protein YggX"/>
    <property type="match status" value="1"/>
</dbReference>
<dbReference type="HAMAP" id="MF_00686">
    <property type="entry name" value="Fe_traffic_YggX"/>
    <property type="match status" value="1"/>
</dbReference>
<dbReference type="InterPro" id="IPR007457">
    <property type="entry name" value="Fe_traffick_prot_YggX"/>
</dbReference>
<dbReference type="InterPro" id="IPR036766">
    <property type="entry name" value="Fe_traffick_prot_YggX_sf"/>
</dbReference>
<dbReference type="NCBIfam" id="NF003817">
    <property type="entry name" value="PRK05408.1"/>
    <property type="match status" value="1"/>
</dbReference>
<dbReference type="PANTHER" id="PTHR36965">
    <property type="entry name" value="FE(2+)-TRAFFICKING PROTEIN-RELATED"/>
    <property type="match status" value="1"/>
</dbReference>
<dbReference type="PANTHER" id="PTHR36965:SF1">
    <property type="entry name" value="FE(2+)-TRAFFICKING PROTEIN-RELATED"/>
    <property type="match status" value="1"/>
</dbReference>
<dbReference type="Pfam" id="PF04362">
    <property type="entry name" value="Iron_traffic"/>
    <property type="match status" value="1"/>
</dbReference>
<dbReference type="PIRSF" id="PIRSF029827">
    <property type="entry name" value="Fe_traffic_YggX"/>
    <property type="match status" value="1"/>
</dbReference>
<dbReference type="SUPFAM" id="SSF111148">
    <property type="entry name" value="YggX-like"/>
    <property type="match status" value="1"/>
</dbReference>